<organism>
    <name type="scientific">Ralstonia nicotianae (strain ATCC BAA-1114 / GMI1000)</name>
    <name type="common">Ralstonia solanacearum</name>
    <dbReference type="NCBI Taxonomy" id="267608"/>
    <lineage>
        <taxon>Bacteria</taxon>
        <taxon>Pseudomonadati</taxon>
        <taxon>Pseudomonadota</taxon>
        <taxon>Betaproteobacteria</taxon>
        <taxon>Burkholderiales</taxon>
        <taxon>Burkholderiaceae</taxon>
        <taxon>Ralstonia</taxon>
        <taxon>Ralstonia solanacearum species complex</taxon>
    </lineage>
</organism>
<sequence>MARSTSGVHQGHQARKRFGQNFLVDDGVIHAIVAAIDPQPDDVLVEIGPGLGALTVPLMERVPTLQVVELDRDLVARLQRRFGDKLIVHAGDALAFDFGTLHVPGRSLRIVGNLPYNISSPLLFHLSAFADRVRDQHFMLQKEVVDRMVAAPGSKAFSRLSVMLQVRYYMELVLEVPPGSFNPPPKVDSAVVRMIPWPADKSPYAPVDMRALGTVVTLAFSQRRKVLRNTLGSLREVIDFDALGFDLGRRAEEVPVADFVAVANALPAERIAGGAPDLNED</sequence>
<protein>
    <recommendedName>
        <fullName evidence="1">Ribosomal RNA small subunit methyltransferase A</fullName>
        <ecNumber evidence="1">2.1.1.182</ecNumber>
    </recommendedName>
    <alternativeName>
        <fullName evidence="1">16S rRNA (adenine(1518)-N(6)/adenine(1519)-N(6))-dimethyltransferase</fullName>
    </alternativeName>
    <alternativeName>
        <fullName evidence="1">16S rRNA dimethyladenosine transferase</fullName>
    </alternativeName>
    <alternativeName>
        <fullName evidence="1">16S rRNA dimethylase</fullName>
    </alternativeName>
    <alternativeName>
        <fullName evidence="1">S-adenosylmethionine-6-N', N'-adenosyl(rRNA) dimethyltransferase</fullName>
    </alternativeName>
</protein>
<keyword id="KW-0963">Cytoplasm</keyword>
<keyword id="KW-0489">Methyltransferase</keyword>
<keyword id="KW-1185">Reference proteome</keyword>
<keyword id="KW-0694">RNA-binding</keyword>
<keyword id="KW-0698">rRNA processing</keyword>
<keyword id="KW-0949">S-adenosyl-L-methionine</keyword>
<keyword id="KW-0808">Transferase</keyword>
<reference key="1">
    <citation type="journal article" date="2002" name="Nature">
        <title>Genome sequence of the plant pathogen Ralstonia solanacearum.</title>
        <authorList>
            <person name="Salanoubat M."/>
            <person name="Genin S."/>
            <person name="Artiguenave F."/>
            <person name="Gouzy J."/>
            <person name="Mangenot S."/>
            <person name="Arlat M."/>
            <person name="Billault A."/>
            <person name="Brottier P."/>
            <person name="Camus J.-C."/>
            <person name="Cattolico L."/>
            <person name="Chandler M."/>
            <person name="Choisne N."/>
            <person name="Claudel-Renard C."/>
            <person name="Cunnac S."/>
            <person name="Demange N."/>
            <person name="Gaspin C."/>
            <person name="Lavie M."/>
            <person name="Moisan A."/>
            <person name="Robert C."/>
            <person name="Saurin W."/>
            <person name="Schiex T."/>
            <person name="Siguier P."/>
            <person name="Thebault P."/>
            <person name="Whalen M."/>
            <person name="Wincker P."/>
            <person name="Levy M."/>
            <person name="Weissenbach J."/>
            <person name="Boucher C.A."/>
        </authorList>
    </citation>
    <scope>NUCLEOTIDE SEQUENCE [LARGE SCALE GENOMIC DNA]</scope>
    <source>
        <strain>ATCC BAA-1114 / GMI1000</strain>
    </source>
</reference>
<comment type="function">
    <text evidence="1">Specifically dimethylates two adjacent adenosines (A1518 and A1519) in the loop of a conserved hairpin near the 3'-end of 16S rRNA in the 30S particle. May play a critical role in biogenesis of 30S subunits.</text>
</comment>
<comment type="catalytic activity">
    <reaction evidence="1">
        <text>adenosine(1518)/adenosine(1519) in 16S rRNA + 4 S-adenosyl-L-methionine = N(6)-dimethyladenosine(1518)/N(6)-dimethyladenosine(1519) in 16S rRNA + 4 S-adenosyl-L-homocysteine + 4 H(+)</text>
        <dbReference type="Rhea" id="RHEA:19609"/>
        <dbReference type="Rhea" id="RHEA-COMP:10232"/>
        <dbReference type="Rhea" id="RHEA-COMP:10233"/>
        <dbReference type="ChEBI" id="CHEBI:15378"/>
        <dbReference type="ChEBI" id="CHEBI:57856"/>
        <dbReference type="ChEBI" id="CHEBI:59789"/>
        <dbReference type="ChEBI" id="CHEBI:74411"/>
        <dbReference type="ChEBI" id="CHEBI:74493"/>
        <dbReference type="EC" id="2.1.1.182"/>
    </reaction>
</comment>
<comment type="subcellular location">
    <subcellularLocation>
        <location evidence="1">Cytoplasm</location>
    </subcellularLocation>
</comment>
<comment type="similarity">
    <text evidence="1">Belongs to the class I-like SAM-binding methyltransferase superfamily. rRNA adenine N(6)-methyltransferase family. RsmA subfamily.</text>
</comment>
<evidence type="ECO:0000255" key="1">
    <source>
        <dbReference type="HAMAP-Rule" id="MF_00607"/>
    </source>
</evidence>
<feature type="chain" id="PRO_0000101589" description="Ribosomal RNA small subunit methyltransferase A">
    <location>
        <begin position="1"/>
        <end position="281"/>
    </location>
</feature>
<feature type="binding site" evidence="1">
    <location>
        <position position="21"/>
    </location>
    <ligand>
        <name>S-adenosyl-L-methionine</name>
        <dbReference type="ChEBI" id="CHEBI:59789"/>
    </ligand>
</feature>
<feature type="binding site" evidence="1">
    <location>
        <position position="23"/>
    </location>
    <ligand>
        <name>S-adenosyl-L-methionine</name>
        <dbReference type="ChEBI" id="CHEBI:59789"/>
    </ligand>
</feature>
<feature type="binding site" evidence="1">
    <location>
        <position position="48"/>
    </location>
    <ligand>
        <name>S-adenosyl-L-methionine</name>
        <dbReference type="ChEBI" id="CHEBI:59789"/>
    </ligand>
</feature>
<feature type="binding site" evidence="1">
    <location>
        <position position="69"/>
    </location>
    <ligand>
        <name>S-adenosyl-L-methionine</name>
        <dbReference type="ChEBI" id="CHEBI:59789"/>
    </ligand>
</feature>
<feature type="binding site" evidence="1">
    <location>
        <position position="92"/>
    </location>
    <ligand>
        <name>S-adenosyl-L-methionine</name>
        <dbReference type="ChEBI" id="CHEBI:59789"/>
    </ligand>
</feature>
<feature type="binding site" evidence="1">
    <location>
        <position position="113"/>
    </location>
    <ligand>
        <name>S-adenosyl-L-methionine</name>
        <dbReference type="ChEBI" id="CHEBI:59789"/>
    </ligand>
</feature>
<proteinExistence type="inferred from homology"/>
<dbReference type="EC" id="2.1.1.182" evidence="1"/>
<dbReference type="EMBL" id="AL646052">
    <property type="protein sequence ID" value="CAD14046.1"/>
    <property type="molecule type" value="Genomic_DNA"/>
</dbReference>
<dbReference type="RefSeq" id="WP_011000477.1">
    <property type="nucleotide sequence ID" value="NC_003295.1"/>
</dbReference>
<dbReference type="SMR" id="Q8Y219"/>
<dbReference type="STRING" id="267608.RSc0518"/>
<dbReference type="EnsemblBacteria" id="CAD14046">
    <property type="protein sequence ID" value="CAD14046"/>
    <property type="gene ID" value="RSc0518"/>
</dbReference>
<dbReference type="KEGG" id="rso:RSc0518"/>
<dbReference type="eggNOG" id="COG0030">
    <property type="taxonomic scope" value="Bacteria"/>
</dbReference>
<dbReference type="HOGENOM" id="CLU_041220_0_1_4"/>
<dbReference type="Proteomes" id="UP000001436">
    <property type="component" value="Chromosome"/>
</dbReference>
<dbReference type="GO" id="GO:0005829">
    <property type="term" value="C:cytosol"/>
    <property type="evidence" value="ECO:0007669"/>
    <property type="project" value="TreeGrafter"/>
</dbReference>
<dbReference type="GO" id="GO:0052908">
    <property type="term" value="F:16S rRNA (adenine(1518)-N(6)/adenine(1519)-N(6))-dimethyltransferase activity"/>
    <property type="evidence" value="ECO:0007669"/>
    <property type="project" value="UniProtKB-EC"/>
</dbReference>
<dbReference type="GO" id="GO:0003723">
    <property type="term" value="F:RNA binding"/>
    <property type="evidence" value="ECO:0007669"/>
    <property type="project" value="UniProtKB-KW"/>
</dbReference>
<dbReference type="FunFam" id="1.10.8.100:FF:000001">
    <property type="entry name" value="Ribosomal RNA small subunit methyltransferase A"/>
    <property type="match status" value="1"/>
</dbReference>
<dbReference type="Gene3D" id="1.10.8.100">
    <property type="entry name" value="Ribosomal RNA adenine dimethylase-like, domain 2"/>
    <property type="match status" value="1"/>
</dbReference>
<dbReference type="Gene3D" id="3.40.50.150">
    <property type="entry name" value="Vaccinia Virus protein VP39"/>
    <property type="match status" value="1"/>
</dbReference>
<dbReference type="HAMAP" id="MF_00607">
    <property type="entry name" value="16SrRNA_methyltr_A"/>
    <property type="match status" value="1"/>
</dbReference>
<dbReference type="InterPro" id="IPR001737">
    <property type="entry name" value="KsgA/Erm"/>
</dbReference>
<dbReference type="InterPro" id="IPR023165">
    <property type="entry name" value="rRNA_Ade_diMease-like_C"/>
</dbReference>
<dbReference type="InterPro" id="IPR020596">
    <property type="entry name" value="rRNA_Ade_Mease_Trfase_CS"/>
</dbReference>
<dbReference type="InterPro" id="IPR020598">
    <property type="entry name" value="rRNA_Ade_methylase_Trfase_N"/>
</dbReference>
<dbReference type="InterPro" id="IPR011530">
    <property type="entry name" value="rRNA_adenine_dimethylase"/>
</dbReference>
<dbReference type="InterPro" id="IPR029063">
    <property type="entry name" value="SAM-dependent_MTases_sf"/>
</dbReference>
<dbReference type="NCBIfam" id="TIGR00755">
    <property type="entry name" value="ksgA"/>
    <property type="match status" value="1"/>
</dbReference>
<dbReference type="PANTHER" id="PTHR11727">
    <property type="entry name" value="DIMETHYLADENOSINE TRANSFERASE"/>
    <property type="match status" value="1"/>
</dbReference>
<dbReference type="PANTHER" id="PTHR11727:SF7">
    <property type="entry name" value="DIMETHYLADENOSINE TRANSFERASE-RELATED"/>
    <property type="match status" value="1"/>
</dbReference>
<dbReference type="Pfam" id="PF00398">
    <property type="entry name" value="RrnaAD"/>
    <property type="match status" value="1"/>
</dbReference>
<dbReference type="SMART" id="SM00650">
    <property type="entry name" value="rADc"/>
    <property type="match status" value="1"/>
</dbReference>
<dbReference type="SUPFAM" id="SSF53335">
    <property type="entry name" value="S-adenosyl-L-methionine-dependent methyltransferases"/>
    <property type="match status" value="1"/>
</dbReference>
<dbReference type="PROSITE" id="PS01131">
    <property type="entry name" value="RRNA_A_DIMETH"/>
    <property type="match status" value="1"/>
</dbReference>
<dbReference type="PROSITE" id="PS51689">
    <property type="entry name" value="SAM_RNA_A_N6_MT"/>
    <property type="match status" value="1"/>
</dbReference>
<accession>Q8Y219</accession>
<gene>
    <name evidence="1" type="primary">rsmA</name>
    <name evidence="1" type="synonym">ksgA</name>
    <name type="ordered locus">RSc0518</name>
    <name type="ORF">RS04973</name>
</gene>
<name>RSMA_RALN1</name>